<dbReference type="EC" id="3.6.4.-" evidence="1"/>
<dbReference type="EMBL" id="CP000967">
    <property type="protein sequence ID" value="ACD59830.1"/>
    <property type="molecule type" value="Genomic_DNA"/>
</dbReference>
<dbReference type="RefSeq" id="WP_010363979.1">
    <property type="nucleotide sequence ID" value="NC_010717.2"/>
</dbReference>
<dbReference type="SMR" id="B2STK0"/>
<dbReference type="GeneID" id="69689177"/>
<dbReference type="KEGG" id="xop:PXO_01559"/>
<dbReference type="eggNOG" id="COG2255">
    <property type="taxonomic scope" value="Bacteria"/>
</dbReference>
<dbReference type="HOGENOM" id="CLU_055599_1_0_6"/>
<dbReference type="Proteomes" id="UP000001740">
    <property type="component" value="Chromosome"/>
</dbReference>
<dbReference type="GO" id="GO:0005737">
    <property type="term" value="C:cytoplasm"/>
    <property type="evidence" value="ECO:0007669"/>
    <property type="project" value="UniProtKB-SubCell"/>
</dbReference>
<dbReference type="GO" id="GO:0048476">
    <property type="term" value="C:Holliday junction resolvase complex"/>
    <property type="evidence" value="ECO:0007669"/>
    <property type="project" value="UniProtKB-UniRule"/>
</dbReference>
<dbReference type="GO" id="GO:0005524">
    <property type="term" value="F:ATP binding"/>
    <property type="evidence" value="ECO:0007669"/>
    <property type="project" value="UniProtKB-UniRule"/>
</dbReference>
<dbReference type="GO" id="GO:0016887">
    <property type="term" value="F:ATP hydrolysis activity"/>
    <property type="evidence" value="ECO:0007669"/>
    <property type="project" value="InterPro"/>
</dbReference>
<dbReference type="GO" id="GO:0000400">
    <property type="term" value="F:four-way junction DNA binding"/>
    <property type="evidence" value="ECO:0007669"/>
    <property type="project" value="UniProtKB-UniRule"/>
</dbReference>
<dbReference type="GO" id="GO:0009378">
    <property type="term" value="F:four-way junction helicase activity"/>
    <property type="evidence" value="ECO:0007669"/>
    <property type="project" value="InterPro"/>
</dbReference>
<dbReference type="GO" id="GO:0006310">
    <property type="term" value="P:DNA recombination"/>
    <property type="evidence" value="ECO:0007669"/>
    <property type="project" value="UniProtKB-UniRule"/>
</dbReference>
<dbReference type="GO" id="GO:0006281">
    <property type="term" value="P:DNA repair"/>
    <property type="evidence" value="ECO:0007669"/>
    <property type="project" value="UniProtKB-UniRule"/>
</dbReference>
<dbReference type="CDD" id="cd00009">
    <property type="entry name" value="AAA"/>
    <property type="match status" value="1"/>
</dbReference>
<dbReference type="FunFam" id="3.40.50.300:FF:000073">
    <property type="entry name" value="Holliday junction ATP-dependent DNA helicase RuvB"/>
    <property type="match status" value="1"/>
</dbReference>
<dbReference type="Gene3D" id="1.10.8.60">
    <property type="match status" value="1"/>
</dbReference>
<dbReference type="Gene3D" id="3.40.50.300">
    <property type="entry name" value="P-loop containing nucleotide triphosphate hydrolases"/>
    <property type="match status" value="1"/>
</dbReference>
<dbReference type="Gene3D" id="1.10.10.10">
    <property type="entry name" value="Winged helix-like DNA-binding domain superfamily/Winged helix DNA-binding domain"/>
    <property type="match status" value="1"/>
</dbReference>
<dbReference type="HAMAP" id="MF_00016">
    <property type="entry name" value="DNA_HJ_migration_RuvB"/>
    <property type="match status" value="1"/>
</dbReference>
<dbReference type="InterPro" id="IPR003593">
    <property type="entry name" value="AAA+_ATPase"/>
</dbReference>
<dbReference type="InterPro" id="IPR041445">
    <property type="entry name" value="AAA_lid_4"/>
</dbReference>
<dbReference type="InterPro" id="IPR004605">
    <property type="entry name" value="DNA_helicase_Holl-junc_RuvB"/>
</dbReference>
<dbReference type="InterPro" id="IPR027417">
    <property type="entry name" value="P-loop_NTPase"/>
</dbReference>
<dbReference type="InterPro" id="IPR008824">
    <property type="entry name" value="RuvB-like_N"/>
</dbReference>
<dbReference type="InterPro" id="IPR008823">
    <property type="entry name" value="RuvB_C"/>
</dbReference>
<dbReference type="InterPro" id="IPR036388">
    <property type="entry name" value="WH-like_DNA-bd_sf"/>
</dbReference>
<dbReference type="InterPro" id="IPR036390">
    <property type="entry name" value="WH_DNA-bd_sf"/>
</dbReference>
<dbReference type="NCBIfam" id="NF000868">
    <property type="entry name" value="PRK00080.1"/>
    <property type="match status" value="1"/>
</dbReference>
<dbReference type="NCBIfam" id="TIGR00635">
    <property type="entry name" value="ruvB"/>
    <property type="match status" value="1"/>
</dbReference>
<dbReference type="PANTHER" id="PTHR42848">
    <property type="match status" value="1"/>
</dbReference>
<dbReference type="PANTHER" id="PTHR42848:SF1">
    <property type="entry name" value="HOLLIDAY JUNCTION BRANCH MIGRATION COMPLEX SUBUNIT RUVB"/>
    <property type="match status" value="1"/>
</dbReference>
<dbReference type="Pfam" id="PF17864">
    <property type="entry name" value="AAA_lid_4"/>
    <property type="match status" value="1"/>
</dbReference>
<dbReference type="Pfam" id="PF05491">
    <property type="entry name" value="RuvB_C"/>
    <property type="match status" value="1"/>
</dbReference>
<dbReference type="Pfam" id="PF05496">
    <property type="entry name" value="RuvB_N"/>
    <property type="match status" value="1"/>
</dbReference>
<dbReference type="SMART" id="SM00382">
    <property type="entry name" value="AAA"/>
    <property type="match status" value="1"/>
</dbReference>
<dbReference type="SUPFAM" id="SSF52540">
    <property type="entry name" value="P-loop containing nucleoside triphosphate hydrolases"/>
    <property type="match status" value="1"/>
</dbReference>
<dbReference type="SUPFAM" id="SSF46785">
    <property type="entry name" value="Winged helix' DNA-binding domain"/>
    <property type="match status" value="1"/>
</dbReference>
<keyword id="KW-0067">ATP-binding</keyword>
<keyword id="KW-0963">Cytoplasm</keyword>
<keyword id="KW-0227">DNA damage</keyword>
<keyword id="KW-0233">DNA recombination</keyword>
<keyword id="KW-0234">DNA repair</keyword>
<keyword id="KW-0238">DNA-binding</keyword>
<keyword id="KW-0378">Hydrolase</keyword>
<keyword id="KW-0547">Nucleotide-binding</keyword>
<protein>
    <recommendedName>
        <fullName evidence="1">Holliday junction branch migration complex subunit RuvB</fullName>
        <ecNumber evidence="1">3.6.4.-</ecNumber>
    </recommendedName>
</protein>
<reference key="1">
    <citation type="journal article" date="2008" name="BMC Genomics">
        <title>Genome sequence and rapid evolution of the rice pathogen Xanthomonas oryzae pv. oryzae PXO99A.</title>
        <authorList>
            <person name="Salzberg S.L."/>
            <person name="Sommer D.D."/>
            <person name="Schatz M.C."/>
            <person name="Phillippy A.M."/>
            <person name="Rabinowicz P.D."/>
            <person name="Tsuge S."/>
            <person name="Furutani A."/>
            <person name="Ochiai H."/>
            <person name="Delcher A.L."/>
            <person name="Kelley D."/>
            <person name="Madupu R."/>
            <person name="Puiu D."/>
            <person name="Radune D."/>
            <person name="Shumway M."/>
            <person name="Trapnell C."/>
            <person name="Aparna G."/>
            <person name="Jha G."/>
            <person name="Pandey A."/>
            <person name="Patil P.B."/>
            <person name="Ishihara H."/>
            <person name="Meyer D.F."/>
            <person name="Szurek B."/>
            <person name="Verdier V."/>
            <person name="Koebnik R."/>
            <person name="Dow J.M."/>
            <person name="Ryan R.P."/>
            <person name="Hirata H."/>
            <person name="Tsuyumu S."/>
            <person name="Won Lee S."/>
            <person name="Seo Y.-S."/>
            <person name="Sriariyanum M."/>
            <person name="Ronald P.C."/>
            <person name="Sonti R.V."/>
            <person name="Van Sluys M.-A."/>
            <person name="Leach J.E."/>
            <person name="White F.F."/>
            <person name="Bogdanove A.J."/>
        </authorList>
    </citation>
    <scope>NUCLEOTIDE SEQUENCE [LARGE SCALE GENOMIC DNA]</scope>
    <source>
        <strain>PXO99A</strain>
    </source>
</reference>
<comment type="function">
    <text evidence="1">The RuvA-RuvB-RuvC complex processes Holliday junction (HJ) DNA during genetic recombination and DNA repair, while the RuvA-RuvB complex plays an important role in the rescue of blocked DNA replication forks via replication fork reversal (RFR). RuvA specifically binds to HJ cruciform DNA, conferring on it an open structure. The RuvB hexamer acts as an ATP-dependent pump, pulling dsDNA into and through the RuvAB complex. RuvB forms 2 homohexamers on either side of HJ DNA bound by 1 or 2 RuvA tetramers; 4 subunits per hexamer contact DNA at a time. Coordinated motions by a converter formed by DNA-disengaged RuvB subunits stimulates ATP hydrolysis and nucleotide exchange. Immobilization of the converter enables RuvB to convert the ATP-contained energy into a lever motion, pulling 2 nucleotides of DNA out of the RuvA tetramer per ATP hydrolyzed, thus driving DNA branch migration. The RuvB motors rotate together with the DNA substrate, which together with the progressing nucleotide cycle form the mechanistic basis for DNA recombination by continuous HJ branch migration. Branch migration allows RuvC to scan DNA until it finds its consensus sequence, where it cleaves and resolves cruciform DNA.</text>
</comment>
<comment type="catalytic activity">
    <reaction evidence="1">
        <text>ATP + H2O = ADP + phosphate + H(+)</text>
        <dbReference type="Rhea" id="RHEA:13065"/>
        <dbReference type="ChEBI" id="CHEBI:15377"/>
        <dbReference type="ChEBI" id="CHEBI:15378"/>
        <dbReference type="ChEBI" id="CHEBI:30616"/>
        <dbReference type="ChEBI" id="CHEBI:43474"/>
        <dbReference type="ChEBI" id="CHEBI:456216"/>
    </reaction>
</comment>
<comment type="subunit">
    <text evidence="1">Homohexamer. Forms an RuvA(8)-RuvB(12)-Holliday junction (HJ) complex. HJ DNA is sandwiched between 2 RuvA tetramers; dsDNA enters through RuvA and exits via RuvB. An RuvB hexamer assembles on each DNA strand where it exits the tetramer. Each RuvB hexamer is contacted by two RuvA subunits (via domain III) on 2 adjacent RuvB subunits; this complex drives branch migration. In the full resolvosome a probable DNA-RuvA(4)-RuvB(12)-RuvC(2) complex forms which resolves the HJ.</text>
</comment>
<comment type="subcellular location">
    <subcellularLocation>
        <location evidence="1">Cytoplasm</location>
    </subcellularLocation>
</comment>
<comment type="domain">
    <text evidence="1">Has 3 domains, the large (RuvB-L) and small ATPase (RuvB-S) domains and the C-terminal head (RuvB-H) domain. The head domain binds DNA, while the ATPase domains jointly bind ATP, ADP or are empty depending on the state of the subunit in the translocation cycle. During a single DNA translocation step the structure of each domain remains the same, but their relative positions change.</text>
</comment>
<comment type="similarity">
    <text evidence="1">Belongs to the RuvB family.</text>
</comment>
<proteinExistence type="inferred from homology"/>
<accession>B2STK0</accession>
<gene>
    <name evidence="1" type="primary">ruvB</name>
    <name type="ordered locus">PXO_01559</name>
</gene>
<sequence length="345" mass="37845">MDQRIIASSSTREDDAADASIRPKRLADYLGQQPVREQMEIYIQAAKARGEAMDHVLIFGPPGLGKTTLSHVIANELGVSLRVTSGPVIEKAGDLAALLTNLQPHDVLFIDEIHRLSPVVEEVLYPAMEDFQIDIMIGDGPAARSIKIDLPPFTLIGATTRAGLLTAPLRDRFGIVQRLEFYSPQELTRIVIRSAAILGIDCTPEGAAEIARRARGTPRIANRLLRRVRDYAQVKAAGHIDLPVAQAAMQMLKVDPEGFDELDRRMLRTIVEHFDGGPVGVESLAASLSEERGTLEDVIEPYLIQQGFLIRTARGRMVTTKAYLHLGLKPPRDRAPGIGEPGDLF</sequence>
<name>RUVB_XANOP</name>
<organism>
    <name type="scientific">Xanthomonas oryzae pv. oryzae (strain PXO99A)</name>
    <dbReference type="NCBI Taxonomy" id="360094"/>
    <lineage>
        <taxon>Bacteria</taxon>
        <taxon>Pseudomonadati</taxon>
        <taxon>Pseudomonadota</taxon>
        <taxon>Gammaproteobacteria</taxon>
        <taxon>Lysobacterales</taxon>
        <taxon>Lysobacteraceae</taxon>
        <taxon>Xanthomonas</taxon>
    </lineage>
</organism>
<evidence type="ECO:0000255" key="1">
    <source>
        <dbReference type="HAMAP-Rule" id="MF_00016"/>
    </source>
</evidence>
<feature type="chain" id="PRO_1000089695" description="Holliday junction branch migration complex subunit RuvB">
    <location>
        <begin position="1"/>
        <end position="345"/>
    </location>
</feature>
<feature type="region of interest" description="Large ATPase domain (RuvB-L)" evidence="1">
    <location>
        <begin position="1"/>
        <end position="182"/>
    </location>
</feature>
<feature type="region of interest" description="Small ATPAse domain (RuvB-S)" evidence="1">
    <location>
        <begin position="183"/>
        <end position="253"/>
    </location>
</feature>
<feature type="region of interest" description="Head domain (RuvB-H)" evidence="1">
    <location>
        <begin position="256"/>
        <end position="345"/>
    </location>
</feature>
<feature type="binding site" evidence="1">
    <location>
        <position position="21"/>
    </location>
    <ligand>
        <name>ATP</name>
        <dbReference type="ChEBI" id="CHEBI:30616"/>
    </ligand>
</feature>
<feature type="binding site" evidence="1">
    <location>
        <position position="22"/>
    </location>
    <ligand>
        <name>ATP</name>
        <dbReference type="ChEBI" id="CHEBI:30616"/>
    </ligand>
</feature>
<feature type="binding site" evidence="1">
    <location>
        <position position="63"/>
    </location>
    <ligand>
        <name>ATP</name>
        <dbReference type="ChEBI" id="CHEBI:30616"/>
    </ligand>
</feature>
<feature type="binding site" evidence="1">
    <location>
        <position position="66"/>
    </location>
    <ligand>
        <name>ATP</name>
        <dbReference type="ChEBI" id="CHEBI:30616"/>
    </ligand>
</feature>
<feature type="binding site" evidence="1">
    <location>
        <position position="67"/>
    </location>
    <ligand>
        <name>ATP</name>
        <dbReference type="ChEBI" id="CHEBI:30616"/>
    </ligand>
</feature>
<feature type="binding site" evidence="1">
    <location>
        <position position="67"/>
    </location>
    <ligand>
        <name>Mg(2+)</name>
        <dbReference type="ChEBI" id="CHEBI:18420"/>
    </ligand>
</feature>
<feature type="binding site" evidence="1">
    <location>
        <position position="68"/>
    </location>
    <ligand>
        <name>ATP</name>
        <dbReference type="ChEBI" id="CHEBI:30616"/>
    </ligand>
</feature>
<feature type="binding site" evidence="1">
    <location>
        <begin position="129"/>
        <end position="131"/>
    </location>
    <ligand>
        <name>ATP</name>
        <dbReference type="ChEBI" id="CHEBI:30616"/>
    </ligand>
</feature>
<feature type="binding site" evidence="1">
    <location>
        <position position="172"/>
    </location>
    <ligand>
        <name>ATP</name>
        <dbReference type="ChEBI" id="CHEBI:30616"/>
    </ligand>
</feature>
<feature type="binding site" evidence="1">
    <location>
        <position position="182"/>
    </location>
    <ligand>
        <name>ATP</name>
        <dbReference type="ChEBI" id="CHEBI:30616"/>
    </ligand>
</feature>
<feature type="binding site" evidence="1">
    <location>
        <position position="219"/>
    </location>
    <ligand>
        <name>ATP</name>
        <dbReference type="ChEBI" id="CHEBI:30616"/>
    </ligand>
</feature>
<feature type="binding site" evidence="1">
    <location>
        <position position="292"/>
    </location>
    <ligand>
        <name>DNA</name>
        <dbReference type="ChEBI" id="CHEBI:16991"/>
    </ligand>
</feature>
<feature type="binding site" evidence="1">
    <location>
        <position position="311"/>
    </location>
    <ligand>
        <name>DNA</name>
        <dbReference type="ChEBI" id="CHEBI:16991"/>
    </ligand>
</feature>
<feature type="binding site" evidence="1">
    <location>
        <position position="316"/>
    </location>
    <ligand>
        <name>DNA</name>
        <dbReference type="ChEBI" id="CHEBI:16991"/>
    </ligand>
</feature>